<evidence type="ECO:0000269" key="1">
    <source>
    </source>
</evidence>
<evidence type="ECO:0000305" key="2"/>
<keyword id="KW-0963">Cytoplasm</keyword>
<keyword id="KW-0539">Nucleus</keyword>
<keyword id="KW-1185">Reference proteome</keyword>
<sequence length="219" mass="25166">MLVLFGQPENWHEQDFRAVDDRVRGGSSISHLTEEKDSDGKSRAKFWGTLDTKTLGGAGFCSQATNIKDRTWNLKEFKGIELDIAKSDSYKYTFIIKDCHQDWETSDEKSSLSYEYDFTPIYSKEDQVVSIPFSEFKPTYRGRPVEGAPELDVSKITQFSIMIRSFFNSQSGDYELVLNSIRAIPKNVPFTTHKMSNEKQRLFDDYEKEIAGGSWCICQ</sequence>
<feature type="chain" id="PRO_0000341601" description="Uncharacterized protein C9E9.15">
    <location>
        <begin position="1"/>
        <end position="219"/>
    </location>
</feature>
<name>YF1F_SCHPO</name>
<dbReference type="EMBL" id="CU329670">
    <property type="protein sequence ID" value="CAB16413.1"/>
    <property type="molecule type" value="Genomic_DNA"/>
</dbReference>
<dbReference type="PIR" id="T39222">
    <property type="entry name" value="T39222"/>
</dbReference>
<dbReference type="RefSeq" id="NP_594588.1">
    <property type="nucleotide sequence ID" value="NM_001020017.2"/>
</dbReference>
<dbReference type="SMR" id="O14297"/>
<dbReference type="BioGRID" id="278789">
    <property type="interactions" value="2"/>
</dbReference>
<dbReference type="STRING" id="284812.O14297"/>
<dbReference type="iPTMnet" id="O14297"/>
<dbReference type="PaxDb" id="4896-SPAC9E9.15.1"/>
<dbReference type="EnsemblFungi" id="SPAC9E9.15.1">
    <property type="protein sequence ID" value="SPAC9E9.15.1:pep"/>
    <property type="gene ID" value="SPAC9E9.15"/>
</dbReference>
<dbReference type="KEGG" id="spo:2542323"/>
<dbReference type="PomBase" id="SPAC9E9.15"/>
<dbReference type="VEuPathDB" id="FungiDB:SPAC9E9.15"/>
<dbReference type="eggNOG" id="ENOG502S3C5">
    <property type="taxonomic scope" value="Eukaryota"/>
</dbReference>
<dbReference type="HOGENOM" id="CLU_059028_3_1_1"/>
<dbReference type="InParanoid" id="O14297"/>
<dbReference type="OMA" id="IMVRSFF"/>
<dbReference type="PhylomeDB" id="O14297"/>
<dbReference type="PRO" id="PR:O14297"/>
<dbReference type="Proteomes" id="UP000002485">
    <property type="component" value="Chromosome I"/>
</dbReference>
<dbReference type="GO" id="GO:0005829">
    <property type="term" value="C:cytosol"/>
    <property type="evidence" value="ECO:0007005"/>
    <property type="project" value="PomBase"/>
</dbReference>
<dbReference type="GO" id="GO:0005739">
    <property type="term" value="C:mitochondrion"/>
    <property type="evidence" value="ECO:0000250"/>
    <property type="project" value="PomBase"/>
</dbReference>
<dbReference type="GO" id="GO:0005634">
    <property type="term" value="C:nucleus"/>
    <property type="evidence" value="ECO:0007005"/>
    <property type="project" value="PomBase"/>
</dbReference>
<dbReference type="GO" id="GO:0051082">
    <property type="term" value="F:unfolded protein binding"/>
    <property type="evidence" value="ECO:0000318"/>
    <property type="project" value="GO_Central"/>
</dbReference>
<dbReference type="GO" id="GO:0007005">
    <property type="term" value="P:mitochondrion organization"/>
    <property type="evidence" value="ECO:0000305"/>
    <property type="project" value="PomBase"/>
</dbReference>
<dbReference type="GO" id="GO:0065003">
    <property type="term" value="P:protein-containing complex assembly"/>
    <property type="evidence" value="ECO:0000250"/>
    <property type="project" value="PomBase"/>
</dbReference>
<dbReference type="Gene3D" id="2.60.120.430">
    <property type="entry name" value="Galactose-binding lectin"/>
    <property type="match status" value="1"/>
</dbReference>
<dbReference type="InterPro" id="IPR008979">
    <property type="entry name" value="Galactose-bd-like_sf"/>
</dbReference>
<dbReference type="InterPro" id="IPR013857">
    <property type="entry name" value="NADH-UbQ_OxRdtase-assoc_prot30"/>
</dbReference>
<dbReference type="InterPro" id="IPR039131">
    <property type="entry name" value="NDUFAF1"/>
</dbReference>
<dbReference type="PANTHER" id="PTHR13194">
    <property type="entry name" value="COMPLEX I INTERMEDIATE-ASSOCIATED PROTEIN 30"/>
    <property type="match status" value="1"/>
</dbReference>
<dbReference type="PANTHER" id="PTHR13194:SF19">
    <property type="entry name" value="NAD(P)-BINDING ROSSMANN-FOLD SUPERFAMILY PROTEIN"/>
    <property type="match status" value="1"/>
</dbReference>
<dbReference type="Pfam" id="PF08547">
    <property type="entry name" value="CIA30"/>
    <property type="match status" value="1"/>
</dbReference>
<dbReference type="SUPFAM" id="SSF49785">
    <property type="entry name" value="Galactose-binding domain-like"/>
    <property type="match status" value="1"/>
</dbReference>
<protein>
    <recommendedName>
        <fullName>Uncharacterized protein C9E9.15</fullName>
    </recommendedName>
</protein>
<reference key="1">
    <citation type="journal article" date="2002" name="Nature">
        <title>The genome sequence of Schizosaccharomyces pombe.</title>
        <authorList>
            <person name="Wood V."/>
            <person name="Gwilliam R."/>
            <person name="Rajandream M.A."/>
            <person name="Lyne M.H."/>
            <person name="Lyne R."/>
            <person name="Stewart A."/>
            <person name="Sgouros J.G."/>
            <person name="Peat N."/>
            <person name="Hayles J."/>
            <person name="Baker S.G."/>
            <person name="Basham D."/>
            <person name="Bowman S."/>
            <person name="Brooks K."/>
            <person name="Brown D."/>
            <person name="Brown S."/>
            <person name="Chillingworth T."/>
            <person name="Churcher C.M."/>
            <person name="Collins M."/>
            <person name="Connor R."/>
            <person name="Cronin A."/>
            <person name="Davis P."/>
            <person name="Feltwell T."/>
            <person name="Fraser A."/>
            <person name="Gentles S."/>
            <person name="Goble A."/>
            <person name="Hamlin N."/>
            <person name="Harris D.E."/>
            <person name="Hidalgo J."/>
            <person name="Hodgson G."/>
            <person name="Holroyd S."/>
            <person name="Hornsby T."/>
            <person name="Howarth S."/>
            <person name="Huckle E.J."/>
            <person name="Hunt S."/>
            <person name="Jagels K."/>
            <person name="James K.D."/>
            <person name="Jones L."/>
            <person name="Jones M."/>
            <person name="Leather S."/>
            <person name="McDonald S."/>
            <person name="McLean J."/>
            <person name="Mooney P."/>
            <person name="Moule S."/>
            <person name="Mungall K.L."/>
            <person name="Murphy L.D."/>
            <person name="Niblett D."/>
            <person name="Odell C."/>
            <person name="Oliver K."/>
            <person name="O'Neil S."/>
            <person name="Pearson D."/>
            <person name="Quail M.A."/>
            <person name="Rabbinowitsch E."/>
            <person name="Rutherford K.M."/>
            <person name="Rutter S."/>
            <person name="Saunders D."/>
            <person name="Seeger K."/>
            <person name="Sharp S."/>
            <person name="Skelton J."/>
            <person name="Simmonds M.N."/>
            <person name="Squares R."/>
            <person name="Squares S."/>
            <person name="Stevens K."/>
            <person name="Taylor K."/>
            <person name="Taylor R.G."/>
            <person name="Tivey A."/>
            <person name="Walsh S.V."/>
            <person name="Warren T."/>
            <person name="Whitehead S."/>
            <person name="Woodward J.R."/>
            <person name="Volckaert G."/>
            <person name="Aert R."/>
            <person name="Robben J."/>
            <person name="Grymonprez B."/>
            <person name="Weltjens I."/>
            <person name="Vanstreels E."/>
            <person name="Rieger M."/>
            <person name="Schaefer M."/>
            <person name="Mueller-Auer S."/>
            <person name="Gabel C."/>
            <person name="Fuchs M."/>
            <person name="Duesterhoeft A."/>
            <person name="Fritzc C."/>
            <person name="Holzer E."/>
            <person name="Moestl D."/>
            <person name="Hilbert H."/>
            <person name="Borzym K."/>
            <person name="Langer I."/>
            <person name="Beck A."/>
            <person name="Lehrach H."/>
            <person name="Reinhardt R."/>
            <person name="Pohl T.M."/>
            <person name="Eger P."/>
            <person name="Zimmermann W."/>
            <person name="Wedler H."/>
            <person name="Wambutt R."/>
            <person name="Purnelle B."/>
            <person name="Goffeau A."/>
            <person name="Cadieu E."/>
            <person name="Dreano S."/>
            <person name="Gloux S."/>
            <person name="Lelaure V."/>
            <person name="Mottier S."/>
            <person name="Galibert F."/>
            <person name="Aves S.J."/>
            <person name="Xiang Z."/>
            <person name="Hunt C."/>
            <person name="Moore K."/>
            <person name="Hurst S.M."/>
            <person name="Lucas M."/>
            <person name="Rochet M."/>
            <person name="Gaillardin C."/>
            <person name="Tallada V.A."/>
            <person name="Garzon A."/>
            <person name="Thode G."/>
            <person name="Daga R.R."/>
            <person name="Cruzado L."/>
            <person name="Jimenez J."/>
            <person name="Sanchez M."/>
            <person name="del Rey F."/>
            <person name="Benito J."/>
            <person name="Dominguez A."/>
            <person name="Revuelta J.L."/>
            <person name="Moreno S."/>
            <person name="Armstrong J."/>
            <person name="Forsburg S.L."/>
            <person name="Cerutti L."/>
            <person name="Lowe T."/>
            <person name="McCombie W.R."/>
            <person name="Paulsen I."/>
            <person name="Potashkin J."/>
            <person name="Shpakovski G.V."/>
            <person name="Ussery D."/>
            <person name="Barrell B.G."/>
            <person name="Nurse P."/>
        </authorList>
    </citation>
    <scope>NUCLEOTIDE SEQUENCE [LARGE SCALE GENOMIC DNA]</scope>
    <source>
        <strain>972 / ATCC 24843</strain>
    </source>
</reference>
<reference key="2">
    <citation type="journal article" date="2006" name="Nat. Biotechnol.">
        <title>ORFeome cloning and global analysis of protein localization in the fission yeast Schizosaccharomyces pombe.</title>
        <authorList>
            <person name="Matsuyama A."/>
            <person name="Arai R."/>
            <person name="Yashiroda Y."/>
            <person name="Shirai A."/>
            <person name="Kamata A."/>
            <person name="Sekido S."/>
            <person name="Kobayashi Y."/>
            <person name="Hashimoto A."/>
            <person name="Hamamoto M."/>
            <person name="Hiraoka Y."/>
            <person name="Horinouchi S."/>
            <person name="Yoshida M."/>
        </authorList>
    </citation>
    <scope>SUBCELLULAR LOCATION [LARGE SCALE ANALYSIS]</scope>
</reference>
<accession>O14297</accession>
<comment type="subcellular location">
    <subcellularLocation>
        <location evidence="1">Cytoplasm</location>
    </subcellularLocation>
    <subcellularLocation>
        <location evidence="1">Nucleus</location>
    </subcellularLocation>
</comment>
<comment type="similarity">
    <text evidence="2">Belongs to the CIA30 family.</text>
</comment>
<gene>
    <name type="ORF">SPAC9E9.15</name>
</gene>
<organism>
    <name type="scientific">Schizosaccharomyces pombe (strain 972 / ATCC 24843)</name>
    <name type="common">Fission yeast</name>
    <dbReference type="NCBI Taxonomy" id="284812"/>
    <lineage>
        <taxon>Eukaryota</taxon>
        <taxon>Fungi</taxon>
        <taxon>Dikarya</taxon>
        <taxon>Ascomycota</taxon>
        <taxon>Taphrinomycotina</taxon>
        <taxon>Schizosaccharomycetes</taxon>
        <taxon>Schizosaccharomycetales</taxon>
        <taxon>Schizosaccharomycetaceae</taxon>
        <taxon>Schizosaccharomyces</taxon>
    </lineage>
</organism>
<proteinExistence type="inferred from homology"/>